<keyword id="KW-0068">Autocatalytic cleavage</keyword>
<keyword id="KW-0963">Cytoplasm</keyword>
<keyword id="KW-0378">Hydrolase</keyword>
<keyword id="KW-0645">Protease</keyword>
<keyword id="KW-0647">Proteasome</keyword>
<keyword id="KW-0888">Threonine protease</keyword>
<keyword id="KW-0865">Zymogen</keyword>
<protein>
    <recommendedName>
        <fullName evidence="1">Proteasome subunit beta</fullName>
        <ecNumber evidence="1">3.4.25.1</ecNumber>
    </recommendedName>
    <alternativeName>
        <fullName evidence="1">20S proteasome beta subunit</fullName>
    </alternativeName>
    <alternativeName>
        <fullName evidence="1">Proteasome core protein PsmB</fullName>
    </alternativeName>
</protein>
<sequence length="217" mass="23479">MIANNDQYKEYMKGTTTVGIVCNDGIVLATDKRATMGNLIADKEAKKLYKIDDYMAMTIAGSVGDAQSLVRIISAEANLYKLRTGNNIPPHSCAMLLSNVLHGSRHFPFLIQLIIGGYDTIHGAKLFSLDAVGGLNEETSFTATGSGSPTAFGVLEEEYKKDMTINKGKLLAIKSLTAAMKRDAFSGNGISLAVIDKNGVKIYSDEEIEELSNILYK</sequence>
<name>PSB_META3</name>
<reference key="1">
    <citation type="submission" date="2007-06" db="EMBL/GenBank/DDBJ databases">
        <title>Complete sequence of Methanococcus aeolicus Nankai-3.</title>
        <authorList>
            <consortium name="US DOE Joint Genome Institute"/>
            <person name="Copeland A."/>
            <person name="Lucas S."/>
            <person name="Lapidus A."/>
            <person name="Barry K."/>
            <person name="Glavina del Rio T."/>
            <person name="Dalin E."/>
            <person name="Tice H."/>
            <person name="Pitluck S."/>
            <person name="Chain P."/>
            <person name="Malfatti S."/>
            <person name="Shin M."/>
            <person name="Vergez L."/>
            <person name="Schmutz J."/>
            <person name="Larimer F."/>
            <person name="Land M."/>
            <person name="Hauser L."/>
            <person name="Kyrpides N."/>
            <person name="Lykidis A."/>
            <person name="Sieprawska-Lupa M."/>
            <person name="Whitman W.B."/>
            <person name="Richardson P."/>
        </authorList>
    </citation>
    <scope>NUCLEOTIDE SEQUENCE [LARGE SCALE GENOMIC DNA]</scope>
    <source>
        <strain>ATCC BAA-1280 / DSM 17508 / OCM 812 / Nankai-3</strain>
    </source>
</reference>
<gene>
    <name evidence="1" type="primary">psmB</name>
    <name type="ordered locus">Maeo_0050</name>
</gene>
<accession>A6UT20</accession>
<feature type="propeptide" id="PRO_0000397344" description="Removed in mature form; by autocatalysis" evidence="1">
    <location>
        <begin position="1"/>
        <end position="14"/>
    </location>
</feature>
<feature type="chain" id="PRO_0000397345" description="Proteasome subunit beta">
    <location>
        <begin position="15"/>
        <end position="217"/>
    </location>
</feature>
<feature type="active site" description="Nucleophile" evidence="1">
    <location>
        <position position="15"/>
    </location>
</feature>
<comment type="function">
    <text evidence="1">Component of the proteasome core, a large protease complex with broad specificity involved in protein degradation.</text>
</comment>
<comment type="catalytic activity">
    <reaction evidence="1">
        <text>Cleavage of peptide bonds with very broad specificity.</text>
        <dbReference type="EC" id="3.4.25.1"/>
    </reaction>
</comment>
<comment type="activity regulation">
    <text evidence="1">The formation of the proteasomal ATPase PAN-20S proteasome complex, via the docking of the C-termini of PAN into the intersubunit pockets in the alpha-rings, triggers opening of the gate for substrate entry. Interconversion between the open-gate and close-gate conformations leads to a dynamic regulation of the 20S proteasome proteolysis activity.</text>
</comment>
<comment type="subunit">
    <text evidence="1">The 20S proteasome core is composed of 14 alpha and 14 beta subunits that assemble into four stacked heptameric rings, resulting in a barrel-shaped structure. The two inner rings, each composed of seven catalytic beta subunits, are sandwiched by two outer rings, each composed of seven alpha subunits. The catalytic chamber with the active sites is on the inside of the barrel. Has a gated structure, the ends of the cylinder being occluded by the N-termini of the alpha-subunits. Is capped at one or both ends by the proteasome regulatory ATPase, PAN.</text>
</comment>
<comment type="subcellular location">
    <subcellularLocation>
        <location evidence="1">Cytoplasm</location>
    </subcellularLocation>
</comment>
<comment type="similarity">
    <text evidence="1">Belongs to the peptidase T1B family.</text>
</comment>
<dbReference type="EC" id="3.4.25.1" evidence="1"/>
<dbReference type="EMBL" id="CP000743">
    <property type="protein sequence ID" value="ABR55642.1"/>
    <property type="molecule type" value="Genomic_DNA"/>
</dbReference>
<dbReference type="RefSeq" id="WP_011972774.1">
    <property type="nucleotide sequence ID" value="NC_009635.1"/>
</dbReference>
<dbReference type="SMR" id="A6UT20"/>
<dbReference type="STRING" id="419665.Maeo_0050"/>
<dbReference type="MEROPS" id="T01.002"/>
<dbReference type="GeneID" id="5327362"/>
<dbReference type="GeneID" id="75305061"/>
<dbReference type="KEGG" id="mae:Maeo_0050"/>
<dbReference type="eggNOG" id="arCOG00970">
    <property type="taxonomic scope" value="Archaea"/>
</dbReference>
<dbReference type="HOGENOM" id="CLU_035750_7_2_2"/>
<dbReference type="OrthoDB" id="6330at2157"/>
<dbReference type="Proteomes" id="UP000001106">
    <property type="component" value="Chromosome"/>
</dbReference>
<dbReference type="GO" id="GO:0005737">
    <property type="term" value="C:cytoplasm"/>
    <property type="evidence" value="ECO:0007669"/>
    <property type="project" value="UniProtKB-SubCell"/>
</dbReference>
<dbReference type="GO" id="GO:0019774">
    <property type="term" value="C:proteasome core complex, beta-subunit complex"/>
    <property type="evidence" value="ECO:0007669"/>
    <property type="project" value="UniProtKB-UniRule"/>
</dbReference>
<dbReference type="GO" id="GO:0004298">
    <property type="term" value="F:threonine-type endopeptidase activity"/>
    <property type="evidence" value="ECO:0007669"/>
    <property type="project" value="UniProtKB-UniRule"/>
</dbReference>
<dbReference type="GO" id="GO:0010498">
    <property type="term" value="P:proteasomal protein catabolic process"/>
    <property type="evidence" value="ECO:0007669"/>
    <property type="project" value="UniProtKB-UniRule"/>
</dbReference>
<dbReference type="CDD" id="cd03764">
    <property type="entry name" value="proteasome_beta_archeal"/>
    <property type="match status" value="1"/>
</dbReference>
<dbReference type="FunFam" id="3.60.20.10:FF:000049">
    <property type="entry name" value="Proteasome subunit beta"/>
    <property type="match status" value="1"/>
</dbReference>
<dbReference type="Gene3D" id="3.60.20.10">
    <property type="entry name" value="Glutamine Phosphoribosylpyrophosphate, subunit 1, domain 1"/>
    <property type="match status" value="1"/>
</dbReference>
<dbReference type="HAMAP" id="MF_02113_A">
    <property type="entry name" value="Proteasome_B_A"/>
    <property type="match status" value="1"/>
</dbReference>
<dbReference type="InterPro" id="IPR029055">
    <property type="entry name" value="Ntn_hydrolases_N"/>
</dbReference>
<dbReference type="InterPro" id="IPR019983">
    <property type="entry name" value="Pept_T1A_Psome_bsu_arc"/>
</dbReference>
<dbReference type="InterPro" id="IPR000243">
    <property type="entry name" value="Pept_T1A_subB"/>
</dbReference>
<dbReference type="InterPro" id="IPR016050">
    <property type="entry name" value="Proteasome_bsu_CS"/>
</dbReference>
<dbReference type="InterPro" id="IPR001353">
    <property type="entry name" value="Proteasome_sua/b"/>
</dbReference>
<dbReference type="InterPro" id="IPR023333">
    <property type="entry name" value="Proteasome_suB-type"/>
</dbReference>
<dbReference type="NCBIfam" id="TIGR03634">
    <property type="entry name" value="arc_protsome_B"/>
    <property type="match status" value="1"/>
</dbReference>
<dbReference type="PANTHER" id="PTHR32194:SF0">
    <property type="entry name" value="ATP-DEPENDENT PROTEASE SUBUNIT HSLV"/>
    <property type="match status" value="1"/>
</dbReference>
<dbReference type="PANTHER" id="PTHR32194">
    <property type="entry name" value="METALLOPROTEASE TLDD"/>
    <property type="match status" value="1"/>
</dbReference>
<dbReference type="Pfam" id="PF00227">
    <property type="entry name" value="Proteasome"/>
    <property type="match status" value="1"/>
</dbReference>
<dbReference type="PRINTS" id="PR00141">
    <property type="entry name" value="PROTEASOME"/>
</dbReference>
<dbReference type="SUPFAM" id="SSF56235">
    <property type="entry name" value="N-terminal nucleophile aminohydrolases (Ntn hydrolases)"/>
    <property type="match status" value="1"/>
</dbReference>
<dbReference type="PROSITE" id="PS00854">
    <property type="entry name" value="PROTEASOME_BETA_1"/>
    <property type="match status" value="1"/>
</dbReference>
<dbReference type="PROSITE" id="PS51476">
    <property type="entry name" value="PROTEASOME_BETA_2"/>
    <property type="match status" value="1"/>
</dbReference>
<evidence type="ECO:0000255" key="1">
    <source>
        <dbReference type="HAMAP-Rule" id="MF_02113"/>
    </source>
</evidence>
<organism>
    <name type="scientific">Methanococcus aeolicus (strain ATCC BAA-1280 / DSM 17508 / OCM 812 / Nankai-3)</name>
    <dbReference type="NCBI Taxonomy" id="419665"/>
    <lineage>
        <taxon>Archaea</taxon>
        <taxon>Methanobacteriati</taxon>
        <taxon>Methanobacteriota</taxon>
        <taxon>Methanomada group</taxon>
        <taxon>Methanococci</taxon>
        <taxon>Methanococcales</taxon>
        <taxon>Methanococcaceae</taxon>
        <taxon>Methanococcus</taxon>
    </lineage>
</organism>
<proteinExistence type="inferred from homology"/>